<proteinExistence type="inferred from homology"/>
<keyword id="KW-0050">Antiport</keyword>
<keyword id="KW-0150">Chloroplast</keyword>
<keyword id="KW-0375">Hydrogen ion transport</keyword>
<keyword id="KW-0406">Ion transport</keyword>
<keyword id="KW-0472">Membrane</keyword>
<keyword id="KW-0934">Plastid</keyword>
<keyword id="KW-1001">Plastid inner membrane</keyword>
<keyword id="KW-0630">Potassium</keyword>
<keyword id="KW-0633">Potassium transport</keyword>
<keyword id="KW-0812">Transmembrane</keyword>
<keyword id="KW-1133">Transmembrane helix</keyword>
<keyword id="KW-0813">Transport</keyword>
<sequence length="151" mass="17764">MKKKKALPSLLYLVFIVLLPWGVSSSFNKCLELWIKNWWNTRQSETLLTDIQEKRILERFIELEELSLLDEMIKGKLKTHVQKPPTGIHKEIIQWVKINNEDHLHTILHFSTNIICLAILSGSFFLGKEELVILNSWVQEFFYNLNDSIKA</sequence>
<geneLocation type="chloroplast"/>
<accession>P69374</accession>
<accession>P25411</accession>
<name>CEMA_AEGCR</name>
<reference key="1">
    <citation type="journal article" date="1991" name="Genetics">
        <title>Molecular analysis of the hot spot region related to length mutations in wheat chloroplast DNAs. I. Nucleotide divergence of genes and intergenic spacer regions located in the hot spot region.</title>
        <authorList>
            <person name="Ogihara Y."/>
            <person name="Terachi T."/>
            <person name="Sasakuma T."/>
        </authorList>
    </citation>
    <scope>NUCLEOTIDE SEQUENCE [GENOMIC DNA]</scope>
</reference>
<gene>
    <name evidence="1" type="primary">cemA</name>
    <name type="synonym">ycf10</name>
</gene>
<protein>
    <recommendedName>
        <fullName evidence="1">Potassium/proton antiporter CemA</fullName>
    </recommendedName>
    <alternativeName>
        <fullName evidence="1">Chloroplast envelope membrane protein A</fullName>
        <shortName evidence="1">CemA</shortName>
    </alternativeName>
</protein>
<evidence type="ECO:0000255" key="1">
    <source>
        <dbReference type="HAMAP-Rule" id="MF_01308"/>
    </source>
</evidence>
<evidence type="ECO:0000305" key="2"/>
<comment type="function">
    <text evidence="1">Contributes to K(+)/H(+) antiport activity by supporting proton efflux to control proton extrusion and homeostasis in chloroplasts in a light-dependent manner to modulate photosynthesis. Prevents excessive induction of non-photochemical quenching (NPQ) under continuous-light conditions. Indirectly promotes efficient inorganic carbon uptake into chloroplasts.</text>
</comment>
<comment type="catalytic activity">
    <reaction evidence="1">
        <text>K(+)(in) + H(+)(out) = K(+)(out) + H(+)(in)</text>
        <dbReference type="Rhea" id="RHEA:29467"/>
        <dbReference type="ChEBI" id="CHEBI:15378"/>
        <dbReference type="ChEBI" id="CHEBI:29103"/>
    </reaction>
</comment>
<comment type="subcellular location">
    <subcellularLocation>
        <location evidence="1">Plastid</location>
        <location evidence="1">Chloroplast inner membrane</location>
        <topology evidence="1">Multi-pass membrane protein</topology>
    </subcellularLocation>
</comment>
<comment type="similarity">
    <text evidence="1 2">Belongs to the CemA family.</text>
</comment>
<organism>
    <name type="scientific">Aegilops crassa</name>
    <name type="common">Persian goatgrass</name>
    <name type="synonym">Triticum crassum</name>
    <dbReference type="NCBI Taxonomy" id="4481"/>
    <lineage>
        <taxon>Eukaryota</taxon>
        <taxon>Viridiplantae</taxon>
        <taxon>Streptophyta</taxon>
        <taxon>Embryophyta</taxon>
        <taxon>Tracheophyta</taxon>
        <taxon>Spermatophyta</taxon>
        <taxon>Magnoliopsida</taxon>
        <taxon>Liliopsida</taxon>
        <taxon>Poales</taxon>
        <taxon>Poaceae</taxon>
        <taxon>BOP clade</taxon>
        <taxon>Pooideae</taxon>
        <taxon>Triticodae</taxon>
        <taxon>Triticeae</taxon>
        <taxon>Triticinae</taxon>
        <taxon>Aegilops</taxon>
    </lineage>
</organism>
<feature type="chain" id="PRO_0000216629" description="Potassium/proton antiporter CemA">
    <location>
        <begin position="1"/>
        <end position="151" status="greater than"/>
    </location>
</feature>
<feature type="transmembrane region" description="Helical" evidence="1">
    <location>
        <begin position="7"/>
        <end position="27"/>
    </location>
</feature>
<feature type="transmembrane region" description="Helical" evidence="1">
    <location>
        <begin position="107"/>
        <end position="127"/>
    </location>
</feature>
<feature type="non-terminal residue">
    <location>
        <position position="151"/>
    </location>
</feature>
<dbReference type="EMBL" id="X62118">
    <property type="protein sequence ID" value="CAA44037.1"/>
    <property type="molecule type" value="Genomic_DNA"/>
</dbReference>
<dbReference type="PIR" id="S21987">
    <property type="entry name" value="S21987"/>
</dbReference>
<dbReference type="SMR" id="P69374"/>
<dbReference type="GO" id="GO:0009706">
    <property type="term" value="C:chloroplast inner membrane"/>
    <property type="evidence" value="ECO:0007669"/>
    <property type="project" value="UniProtKB-SubCell"/>
</dbReference>
<dbReference type="GO" id="GO:0015297">
    <property type="term" value="F:antiporter activity"/>
    <property type="evidence" value="ECO:0007669"/>
    <property type="project" value="UniProtKB-KW"/>
</dbReference>
<dbReference type="GO" id="GO:0006813">
    <property type="term" value="P:potassium ion transport"/>
    <property type="evidence" value="ECO:0007669"/>
    <property type="project" value="UniProtKB-KW"/>
</dbReference>
<dbReference type="GO" id="GO:1902600">
    <property type="term" value="P:proton transmembrane transport"/>
    <property type="evidence" value="ECO:0007669"/>
    <property type="project" value="UniProtKB-KW"/>
</dbReference>
<dbReference type="InterPro" id="IPR004282">
    <property type="entry name" value="CemA"/>
</dbReference>
<dbReference type="PANTHER" id="PTHR33650:SF2">
    <property type="entry name" value="CHLOROPLAST ENVELOPE MEMBRANE PROTEIN"/>
    <property type="match status" value="1"/>
</dbReference>
<dbReference type="PANTHER" id="PTHR33650">
    <property type="entry name" value="CHLOROPLAST ENVELOPE MEMBRANE PROTEIN-RELATED"/>
    <property type="match status" value="1"/>
</dbReference>
<dbReference type="Pfam" id="PF03040">
    <property type="entry name" value="CemA"/>
    <property type="match status" value="1"/>
</dbReference>